<proteinExistence type="inferred from homology"/>
<gene>
    <name type="primary">MED7</name>
    <name type="ordered locus">CAGL0E01551g</name>
</gene>
<name>MED7_CANGA</name>
<comment type="function">
    <text evidence="1">Component of the Mediator complex, a coactivator involved in the regulated transcription of nearly all RNA polymerase II-dependent genes. Mediator functions as a bridge to convey information from gene-specific regulatory proteins to the basal RNA polymerase II transcription machinery. Mediator is recruited to promoters by direct interactions with regulatory proteins and serves as a scaffold for the assembly of a functional preinitiation complex with RNA polymerase II and the general transcription factors (By similarity).</text>
</comment>
<comment type="subunit">
    <text evidence="1">Component of the Mediator complex.</text>
</comment>
<comment type="subcellular location">
    <subcellularLocation>
        <location evidence="1">Nucleus</location>
    </subcellularLocation>
</comment>
<comment type="similarity">
    <text evidence="3">Belongs to the Mediator complex subunit 7 family.</text>
</comment>
<dbReference type="EMBL" id="CR380951">
    <property type="protein sequence ID" value="CAG58675.1"/>
    <property type="molecule type" value="Genomic_DNA"/>
</dbReference>
<dbReference type="RefSeq" id="XP_445756.1">
    <property type="nucleotide sequence ID" value="XM_445756.1"/>
</dbReference>
<dbReference type="SMR" id="Q6FVI8"/>
<dbReference type="FunCoup" id="Q6FVI8">
    <property type="interactions" value="819"/>
</dbReference>
<dbReference type="STRING" id="284593.Q6FVI8"/>
<dbReference type="EnsemblFungi" id="CAGL0E01551g-T">
    <property type="protein sequence ID" value="CAGL0E01551g-T-p1"/>
    <property type="gene ID" value="CAGL0E01551g"/>
</dbReference>
<dbReference type="KEGG" id="cgr:2887513"/>
<dbReference type="CGD" id="CAL0129078">
    <property type="gene designation" value="CAGL0E01551g"/>
</dbReference>
<dbReference type="VEuPathDB" id="FungiDB:CAGL0E01551g"/>
<dbReference type="eggNOG" id="KOG0570">
    <property type="taxonomic scope" value="Eukaryota"/>
</dbReference>
<dbReference type="HOGENOM" id="CLU_065214_0_1_1"/>
<dbReference type="InParanoid" id="Q6FVI8"/>
<dbReference type="OMA" id="MMQDHLD"/>
<dbReference type="Proteomes" id="UP000002428">
    <property type="component" value="Chromosome E"/>
</dbReference>
<dbReference type="GO" id="GO:0070847">
    <property type="term" value="C:core mediator complex"/>
    <property type="evidence" value="ECO:0007669"/>
    <property type="project" value="EnsemblFungi"/>
</dbReference>
<dbReference type="GO" id="GO:0016592">
    <property type="term" value="C:mediator complex"/>
    <property type="evidence" value="ECO:0007669"/>
    <property type="project" value="InterPro"/>
</dbReference>
<dbReference type="GO" id="GO:0003713">
    <property type="term" value="F:transcription coactivator activity"/>
    <property type="evidence" value="ECO:0007669"/>
    <property type="project" value="EnsemblFungi"/>
</dbReference>
<dbReference type="GO" id="GO:0000122">
    <property type="term" value="P:negative regulation of transcription by RNA polymerase II"/>
    <property type="evidence" value="ECO:0007669"/>
    <property type="project" value="EnsemblFungi"/>
</dbReference>
<dbReference type="GO" id="GO:0032968">
    <property type="term" value="P:positive regulation of transcription elongation by RNA polymerase II"/>
    <property type="evidence" value="ECO:0007669"/>
    <property type="project" value="EnsemblFungi"/>
</dbReference>
<dbReference type="GO" id="GO:0060261">
    <property type="term" value="P:positive regulation of transcription initiation by RNA polymerase II"/>
    <property type="evidence" value="ECO:0007669"/>
    <property type="project" value="EnsemblFungi"/>
</dbReference>
<dbReference type="GO" id="GO:0051123">
    <property type="term" value="P:RNA polymerase II preinitiation complex assembly"/>
    <property type="evidence" value="ECO:0007669"/>
    <property type="project" value="EnsemblFungi"/>
</dbReference>
<dbReference type="Gene3D" id="6.10.140.1520">
    <property type="match status" value="1"/>
</dbReference>
<dbReference type="Gene3D" id="6.10.140.200">
    <property type="match status" value="1"/>
</dbReference>
<dbReference type="InterPro" id="IPR037212">
    <property type="entry name" value="Med7/Med21-like"/>
</dbReference>
<dbReference type="InterPro" id="IPR009244">
    <property type="entry name" value="Mediatior_Med7"/>
</dbReference>
<dbReference type="InterPro" id="IPR044888">
    <property type="entry name" value="Mediatior_Med7_sf"/>
</dbReference>
<dbReference type="PANTHER" id="PTHR21428">
    <property type="entry name" value="MEDIATOR OF RNA POLYMERASE II TRANSCRIPTION SUBUNIT 7"/>
    <property type="match status" value="1"/>
</dbReference>
<dbReference type="PANTHER" id="PTHR21428:SF11">
    <property type="entry name" value="MEDIATOR OF RNA POLYMERASE II TRANSCRIPTION SUBUNIT 7"/>
    <property type="match status" value="1"/>
</dbReference>
<dbReference type="Pfam" id="PF05983">
    <property type="entry name" value="Med7"/>
    <property type="match status" value="1"/>
</dbReference>
<dbReference type="SUPFAM" id="SSF140718">
    <property type="entry name" value="Mediator hinge subcomplex-like"/>
    <property type="match status" value="1"/>
</dbReference>
<accession>Q6FVI8</accession>
<sequence>MSREESVSGANDVSSLYPPPPPYIKYFTSENVEKLKEYNERREEGESAENELDFLIPPPMPSSGSYRAFGSVWQIKDHLPDLETMGITQLYKKTSEGEAEVTDYQYKIKELRRLSYSLLLNFVELVGVLSVNPELYESKVENIRTILVNIHHLLNEYRPHQSRESLIMLLEEQLEHKKQEVANIELVCQQVTEKLKQVQTLLKESQSQSQSQSQSQSQSQSQSQLQSDSQ</sequence>
<protein>
    <recommendedName>
        <fullName>Mediator of RNA polymerase II transcription subunit 7</fullName>
    </recommendedName>
    <alternativeName>
        <fullName>Mediator complex subunit 7</fullName>
    </alternativeName>
</protein>
<feature type="chain" id="PRO_0000303197" description="Mediator of RNA polymerase II transcription subunit 7">
    <location>
        <begin position="1"/>
        <end position="230"/>
    </location>
</feature>
<feature type="region of interest" description="Disordered" evidence="2">
    <location>
        <begin position="1"/>
        <end position="22"/>
    </location>
</feature>
<feature type="region of interest" description="Disordered" evidence="2">
    <location>
        <begin position="206"/>
        <end position="230"/>
    </location>
</feature>
<organism>
    <name type="scientific">Candida glabrata (strain ATCC 2001 / BCRC 20586 / JCM 3761 / NBRC 0622 / NRRL Y-65 / CBS 138)</name>
    <name type="common">Yeast</name>
    <name type="synonym">Nakaseomyces glabratus</name>
    <dbReference type="NCBI Taxonomy" id="284593"/>
    <lineage>
        <taxon>Eukaryota</taxon>
        <taxon>Fungi</taxon>
        <taxon>Dikarya</taxon>
        <taxon>Ascomycota</taxon>
        <taxon>Saccharomycotina</taxon>
        <taxon>Saccharomycetes</taxon>
        <taxon>Saccharomycetales</taxon>
        <taxon>Saccharomycetaceae</taxon>
        <taxon>Nakaseomyces</taxon>
    </lineage>
</organism>
<keyword id="KW-0010">Activator</keyword>
<keyword id="KW-0539">Nucleus</keyword>
<keyword id="KW-1185">Reference proteome</keyword>
<keyword id="KW-0804">Transcription</keyword>
<keyword id="KW-0805">Transcription regulation</keyword>
<reference key="1">
    <citation type="journal article" date="2004" name="Nature">
        <title>Genome evolution in yeasts.</title>
        <authorList>
            <person name="Dujon B."/>
            <person name="Sherman D."/>
            <person name="Fischer G."/>
            <person name="Durrens P."/>
            <person name="Casaregola S."/>
            <person name="Lafontaine I."/>
            <person name="de Montigny J."/>
            <person name="Marck C."/>
            <person name="Neuveglise C."/>
            <person name="Talla E."/>
            <person name="Goffard N."/>
            <person name="Frangeul L."/>
            <person name="Aigle M."/>
            <person name="Anthouard V."/>
            <person name="Babour A."/>
            <person name="Barbe V."/>
            <person name="Barnay S."/>
            <person name="Blanchin S."/>
            <person name="Beckerich J.-M."/>
            <person name="Beyne E."/>
            <person name="Bleykasten C."/>
            <person name="Boisrame A."/>
            <person name="Boyer J."/>
            <person name="Cattolico L."/>
            <person name="Confanioleri F."/>
            <person name="de Daruvar A."/>
            <person name="Despons L."/>
            <person name="Fabre E."/>
            <person name="Fairhead C."/>
            <person name="Ferry-Dumazet H."/>
            <person name="Groppi A."/>
            <person name="Hantraye F."/>
            <person name="Hennequin C."/>
            <person name="Jauniaux N."/>
            <person name="Joyet P."/>
            <person name="Kachouri R."/>
            <person name="Kerrest A."/>
            <person name="Koszul R."/>
            <person name="Lemaire M."/>
            <person name="Lesur I."/>
            <person name="Ma L."/>
            <person name="Muller H."/>
            <person name="Nicaud J.-M."/>
            <person name="Nikolski M."/>
            <person name="Oztas S."/>
            <person name="Ozier-Kalogeropoulos O."/>
            <person name="Pellenz S."/>
            <person name="Potier S."/>
            <person name="Richard G.-F."/>
            <person name="Straub M.-L."/>
            <person name="Suleau A."/>
            <person name="Swennen D."/>
            <person name="Tekaia F."/>
            <person name="Wesolowski-Louvel M."/>
            <person name="Westhof E."/>
            <person name="Wirth B."/>
            <person name="Zeniou-Meyer M."/>
            <person name="Zivanovic Y."/>
            <person name="Bolotin-Fukuhara M."/>
            <person name="Thierry A."/>
            <person name="Bouchier C."/>
            <person name="Caudron B."/>
            <person name="Scarpelli C."/>
            <person name="Gaillardin C."/>
            <person name="Weissenbach J."/>
            <person name="Wincker P."/>
            <person name="Souciet J.-L."/>
        </authorList>
    </citation>
    <scope>NUCLEOTIDE SEQUENCE [LARGE SCALE GENOMIC DNA]</scope>
    <source>
        <strain>ATCC 2001 / BCRC 20586 / JCM 3761 / NBRC 0622 / NRRL Y-65 / CBS 138</strain>
    </source>
</reference>
<evidence type="ECO:0000250" key="1"/>
<evidence type="ECO:0000256" key="2">
    <source>
        <dbReference type="SAM" id="MobiDB-lite"/>
    </source>
</evidence>
<evidence type="ECO:0000305" key="3"/>